<reference key="1">
    <citation type="journal article" date="2000" name="Nature">
        <title>DNA sequence of both chromosomes of the cholera pathogen Vibrio cholerae.</title>
        <authorList>
            <person name="Heidelberg J.F."/>
            <person name="Eisen J.A."/>
            <person name="Nelson W.C."/>
            <person name="Clayton R.A."/>
            <person name="Gwinn M.L."/>
            <person name="Dodson R.J."/>
            <person name="Haft D.H."/>
            <person name="Hickey E.K."/>
            <person name="Peterson J.D."/>
            <person name="Umayam L.A."/>
            <person name="Gill S.R."/>
            <person name="Nelson K.E."/>
            <person name="Read T.D."/>
            <person name="Tettelin H."/>
            <person name="Richardson D.L."/>
            <person name="Ermolaeva M.D."/>
            <person name="Vamathevan J.J."/>
            <person name="Bass S."/>
            <person name="Qin H."/>
            <person name="Dragoi I."/>
            <person name="Sellers P."/>
            <person name="McDonald L.A."/>
            <person name="Utterback T.R."/>
            <person name="Fleischmann R.D."/>
            <person name="Nierman W.C."/>
            <person name="White O."/>
            <person name="Salzberg S.L."/>
            <person name="Smith H.O."/>
            <person name="Colwell R.R."/>
            <person name="Mekalanos J.J."/>
            <person name="Venter J.C."/>
            <person name="Fraser C.M."/>
        </authorList>
    </citation>
    <scope>NUCLEOTIDE SEQUENCE [LARGE SCALE GENOMIC DNA]</scope>
    <source>
        <strain>ATCC 39315 / El Tor Inaba N16961</strain>
    </source>
</reference>
<evidence type="ECO:0000255" key="1">
    <source>
        <dbReference type="HAMAP-Rule" id="MF_00639"/>
    </source>
</evidence>
<evidence type="ECO:0000305" key="2"/>
<gene>
    <name evidence="1" type="primary">murD</name>
    <name type="ordered locus">VC_2403</name>
</gene>
<keyword id="KW-0067">ATP-binding</keyword>
<keyword id="KW-0131">Cell cycle</keyword>
<keyword id="KW-0132">Cell division</keyword>
<keyword id="KW-0133">Cell shape</keyword>
<keyword id="KW-0961">Cell wall biogenesis/degradation</keyword>
<keyword id="KW-0963">Cytoplasm</keyword>
<keyword id="KW-0436">Ligase</keyword>
<keyword id="KW-0547">Nucleotide-binding</keyword>
<keyword id="KW-0573">Peptidoglycan synthesis</keyword>
<keyword id="KW-1185">Reference proteome</keyword>
<accession>Q9KPG5</accession>
<comment type="function">
    <text evidence="1">Cell wall formation. Catalyzes the addition of glutamate to the nucleotide precursor UDP-N-acetylmuramoyl-L-alanine (UMA).</text>
</comment>
<comment type="catalytic activity">
    <reaction evidence="1">
        <text>UDP-N-acetyl-alpha-D-muramoyl-L-alanine + D-glutamate + ATP = UDP-N-acetyl-alpha-D-muramoyl-L-alanyl-D-glutamate + ADP + phosphate + H(+)</text>
        <dbReference type="Rhea" id="RHEA:16429"/>
        <dbReference type="ChEBI" id="CHEBI:15378"/>
        <dbReference type="ChEBI" id="CHEBI:29986"/>
        <dbReference type="ChEBI" id="CHEBI:30616"/>
        <dbReference type="ChEBI" id="CHEBI:43474"/>
        <dbReference type="ChEBI" id="CHEBI:83898"/>
        <dbReference type="ChEBI" id="CHEBI:83900"/>
        <dbReference type="ChEBI" id="CHEBI:456216"/>
        <dbReference type="EC" id="6.3.2.9"/>
    </reaction>
</comment>
<comment type="pathway">
    <text evidence="1">Cell wall biogenesis; peptidoglycan biosynthesis.</text>
</comment>
<comment type="subcellular location">
    <subcellularLocation>
        <location evidence="1">Cytoplasm</location>
    </subcellularLocation>
</comment>
<comment type="similarity">
    <text evidence="1">Belongs to the MurCDEF family.</text>
</comment>
<comment type="sequence caution" evidence="2">
    <conflict type="erroneous initiation">
        <sequence resource="EMBL-CDS" id="AAF95546"/>
    </conflict>
</comment>
<organism>
    <name type="scientific">Vibrio cholerae serotype O1 (strain ATCC 39315 / El Tor Inaba N16961)</name>
    <dbReference type="NCBI Taxonomy" id="243277"/>
    <lineage>
        <taxon>Bacteria</taxon>
        <taxon>Pseudomonadati</taxon>
        <taxon>Pseudomonadota</taxon>
        <taxon>Gammaproteobacteria</taxon>
        <taxon>Vibrionales</taxon>
        <taxon>Vibrionaceae</taxon>
        <taxon>Vibrio</taxon>
    </lineage>
</organism>
<proteinExistence type="inferred from homology"/>
<name>MURD_VIBCH</name>
<feature type="chain" id="PRO_0000109119" description="UDP-N-acetylmuramoylalanine--D-glutamate ligase">
    <location>
        <begin position="1"/>
        <end position="440"/>
    </location>
</feature>
<feature type="binding site" evidence="1">
    <location>
        <begin position="115"/>
        <end position="121"/>
    </location>
    <ligand>
        <name>ATP</name>
        <dbReference type="ChEBI" id="CHEBI:30616"/>
    </ligand>
</feature>
<dbReference type="EC" id="6.3.2.9" evidence="1"/>
<dbReference type="EMBL" id="AE003852">
    <property type="protein sequence ID" value="AAF95546.1"/>
    <property type="status" value="ALT_INIT"/>
    <property type="molecule type" value="Genomic_DNA"/>
</dbReference>
<dbReference type="PIR" id="G82081">
    <property type="entry name" value="G82081"/>
</dbReference>
<dbReference type="RefSeq" id="WP_000376398.1">
    <property type="nucleotide sequence ID" value="NZ_LT906614.1"/>
</dbReference>
<dbReference type="SMR" id="Q9KPG5"/>
<dbReference type="STRING" id="243277.VC_2403"/>
<dbReference type="DNASU" id="2613072"/>
<dbReference type="EnsemblBacteria" id="AAF95546">
    <property type="protein sequence ID" value="AAF95546"/>
    <property type="gene ID" value="VC_2403"/>
</dbReference>
<dbReference type="KEGG" id="vch:VC_2403"/>
<dbReference type="eggNOG" id="COG0771">
    <property type="taxonomic scope" value="Bacteria"/>
</dbReference>
<dbReference type="HOGENOM" id="CLU_032540_1_0_6"/>
<dbReference type="UniPathway" id="UPA00219"/>
<dbReference type="Proteomes" id="UP000000584">
    <property type="component" value="Chromosome 1"/>
</dbReference>
<dbReference type="GO" id="GO:0005737">
    <property type="term" value="C:cytoplasm"/>
    <property type="evidence" value="ECO:0007669"/>
    <property type="project" value="UniProtKB-SubCell"/>
</dbReference>
<dbReference type="GO" id="GO:0005524">
    <property type="term" value="F:ATP binding"/>
    <property type="evidence" value="ECO:0007669"/>
    <property type="project" value="UniProtKB-UniRule"/>
</dbReference>
<dbReference type="GO" id="GO:0008764">
    <property type="term" value="F:UDP-N-acetylmuramoylalanine-D-glutamate ligase activity"/>
    <property type="evidence" value="ECO:0007669"/>
    <property type="project" value="UniProtKB-UniRule"/>
</dbReference>
<dbReference type="GO" id="GO:0051301">
    <property type="term" value="P:cell division"/>
    <property type="evidence" value="ECO:0007669"/>
    <property type="project" value="UniProtKB-KW"/>
</dbReference>
<dbReference type="GO" id="GO:0071555">
    <property type="term" value="P:cell wall organization"/>
    <property type="evidence" value="ECO:0007669"/>
    <property type="project" value="UniProtKB-KW"/>
</dbReference>
<dbReference type="GO" id="GO:0009252">
    <property type="term" value="P:peptidoglycan biosynthetic process"/>
    <property type="evidence" value="ECO:0007669"/>
    <property type="project" value="UniProtKB-UniRule"/>
</dbReference>
<dbReference type="GO" id="GO:0008360">
    <property type="term" value="P:regulation of cell shape"/>
    <property type="evidence" value="ECO:0007669"/>
    <property type="project" value="UniProtKB-KW"/>
</dbReference>
<dbReference type="Gene3D" id="3.90.190.20">
    <property type="entry name" value="Mur ligase, C-terminal domain"/>
    <property type="match status" value="1"/>
</dbReference>
<dbReference type="Gene3D" id="3.40.1190.10">
    <property type="entry name" value="Mur-like, catalytic domain"/>
    <property type="match status" value="1"/>
</dbReference>
<dbReference type="Gene3D" id="3.40.50.720">
    <property type="entry name" value="NAD(P)-binding Rossmann-like Domain"/>
    <property type="match status" value="1"/>
</dbReference>
<dbReference type="HAMAP" id="MF_00639">
    <property type="entry name" value="MurD"/>
    <property type="match status" value="1"/>
</dbReference>
<dbReference type="InterPro" id="IPR036565">
    <property type="entry name" value="Mur-like_cat_sf"/>
</dbReference>
<dbReference type="InterPro" id="IPR004101">
    <property type="entry name" value="Mur_ligase_C"/>
</dbReference>
<dbReference type="InterPro" id="IPR036615">
    <property type="entry name" value="Mur_ligase_C_dom_sf"/>
</dbReference>
<dbReference type="InterPro" id="IPR013221">
    <property type="entry name" value="Mur_ligase_cen"/>
</dbReference>
<dbReference type="InterPro" id="IPR005762">
    <property type="entry name" value="MurD"/>
</dbReference>
<dbReference type="NCBIfam" id="TIGR01087">
    <property type="entry name" value="murD"/>
    <property type="match status" value="1"/>
</dbReference>
<dbReference type="PANTHER" id="PTHR43692">
    <property type="entry name" value="UDP-N-ACETYLMURAMOYLALANINE--D-GLUTAMATE LIGASE"/>
    <property type="match status" value="1"/>
</dbReference>
<dbReference type="PANTHER" id="PTHR43692:SF1">
    <property type="entry name" value="UDP-N-ACETYLMURAMOYLALANINE--D-GLUTAMATE LIGASE"/>
    <property type="match status" value="1"/>
</dbReference>
<dbReference type="Pfam" id="PF02875">
    <property type="entry name" value="Mur_ligase_C"/>
    <property type="match status" value="1"/>
</dbReference>
<dbReference type="Pfam" id="PF08245">
    <property type="entry name" value="Mur_ligase_M"/>
    <property type="match status" value="1"/>
</dbReference>
<dbReference type="Pfam" id="PF21799">
    <property type="entry name" value="MurD-like_N"/>
    <property type="match status" value="1"/>
</dbReference>
<dbReference type="SUPFAM" id="SSF51984">
    <property type="entry name" value="MurCD N-terminal domain"/>
    <property type="match status" value="1"/>
</dbReference>
<dbReference type="SUPFAM" id="SSF53623">
    <property type="entry name" value="MurD-like peptide ligases, catalytic domain"/>
    <property type="match status" value="1"/>
</dbReference>
<dbReference type="SUPFAM" id="SSF53244">
    <property type="entry name" value="MurD-like peptide ligases, peptide-binding domain"/>
    <property type="match status" value="1"/>
</dbReference>
<protein>
    <recommendedName>
        <fullName evidence="1">UDP-N-acetylmuramoylalanine--D-glutamate ligase</fullName>
        <ecNumber evidence="1">6.3.2.9</ecNumber>
    </recommendedName>
    <alternativeName>
        <fullName evidence="1">D-glutamic acid-adding enzyme</fullName>
    </alternativeName>
    <alternativeName>
        <fullName evidence="1">UDP-N-acetylmuramoyl-L-alanyl-D-glutamate synthetase</fullName>
    </alternativeName>
</protein>
<sequence length="440" mass="47409">MDRWQGIQHVVVVGLGITGLSVVNYLRKYHPSVTVQVIDTREAPPGQEQLSSDVALHRSGWNLEWLLNADLVVTNPGIALATPEIQQVLAAGIPVVGDIELFAWHVDTPVIAITGSNGKSTVTDLSGVLANAAGVKAAVGGNIGVPALDLISPDVELYVLELSSFQLETTSSLKLKAAAFLNLSEDHMDRYQGMEDYRQAKLRIFDHAETAVVNADDTQTFPDHAAHLQVVTFGVEQAAQFSLAQHQGREYLFARDEAVMACAELSLVGRHNVANVLTVLALLDSAGVNFRLALDALKSYTGLTHRCQVVADNHGIKWVNDSKATNVASTLAALSGLKIEGQLYLLVGGVGKGADFTPLAPVLATLPVQLCCFGVDGHQFMPLHPSARFYDSMESIIRSIRPQLKSGDMVLLSPACASFDQFKNFMARGDIFAQLARQYA</sequence>